<sequence>MIFIDACFRKETPYTPIWMMRQAGRYLSEYQESRKKAGSFLELCKNSDLATEVTLQPVEILGVDAAILFSDILVVPLEMGLNLEFIPKKGPHFLETITDLKSVESLKVGAYKQLNYVYDTISQTRQKLSKEKALIGFCGSPWTLATYMIEGEGSKSYAKSKKMLYSEPEILKALLEKLSLELIEYLSLQIQAGVNAVMIFDSWASALEKEAYLKFSWDYLKKISKELKKRYPHIPVILFPKGIGAYLDSIDGEFDVFGVDWGTPLTAAKKILGGKYVLQGNLEPTRLYDKNALEEGVETILKVMGNQGHIFNLGHGMLPDLPRENAKYLVQLVHAKTRR</sequence>
<reference key="1">
    <citation type="journal article" date="2009" name="J. Bacteriol.">
        <title>The complete genome sequence of Helicobacter pylori strain G27.</title>
        <authorList>
            <person name="Baltrus D.A."/>
            <person name="Amieva M.R."/>
            <person name="Covacci A."/>
            <person name="Lowe T.M."/>
            <person name="Merrell D.S."/>
            <person name="Ottemann K.M."/>
            <person name="Stein M."/>
            <person name="Salama N.R."/>
            <person name="Guillemin K."/>
        </authorList>
    </citation>
    <scope>NUCLEOTIDE SEQUENCE [LARGE SCALE GENOMIC DNA]</scope>
    <source>
        <strain>G27</strain>
    </source>
</reference>
<protein>
    <recommendedName>
        <fullName evidence="1">Uroporphyrinogen decarboxylase</fullName>
        <shortName evidence="1">UPD</shortName>
        <shortName evidence="1">URO-D</shortName>
        <ecNumber evidence="1">4.1.1.37</ecNumber>
    </recommendedName>
</protein>
<dbReference type="EC" id="4.1.1.37" evidence="1"/>
<dbReference type="EMBL" id="CP001173">
    <property type="protein sequence ID" value="ACI27325.1"/>
    <property type="molecule type" value="Genomic_DNA"/>
</dbReference>
<dbReference type="RefSeq" id="WP_012552437.1">
    <property type="nucleotide sequence ID" value="NC_011333.1"/>
</dbReference>
<dbReference type="SMR" id="B5Z6X6"/>
<dbReference type="KEGG" id="hpg:HPG27_565"/>
<dbReference type="HOGENOM" id="CLU_040933_0_0_7"/>
<dbReference type="UniPathway" id="UPA00251">
    <property type="reaction ID" value="UER00321"/>
</dbReference>
<dbReference type="Proteomes" id="UP000001735">
    <property type="component" value="Chromosome"/>
</dbReference>
<dbReference type="GO" id="GO:0005829">
    <property type="term" value="C:cytosol"/>
    <property type="evidence" value="ECO:0007669"/>
    <property type="project" value="TreeGrafter"/>
</dbReference>
<dbReference type="GO" id="GO:0004853">
    <property type="term" value="F:uroporphyrinogen decarboxylase activity"/>
    <property type="evidence" value="ECO:0007669"/>
    <property type="project" value="UniProtKB-UniRule"/>
</dbReference>
<dbReference type="GO" id="GO:0019353">
    <property type="term" value="P:protoporphyrinogen IX biosynthetic process from glutamate"/>
    <property type="evidence" value="ECO:0007669"/>
    <property type="project" value="TreeGrafter"/>
</dbReference>
<dbReference type="CDD" id="cd00717">
    <property type="entry name" value="URO-D"/>
    <property type="match status" value="1"/>
</dbReference>
<dbReference type="FunFam" id="3.20.20.210:FF:000007">
    <property type="entry name" value="Uroporphyrinogen decarboxylase"/>
    <property type="match status" value="1"/>
</dbReference>
<dbReference type="Gene3D" id="3.20.20.210">
    <property type="match status" value="1"/>
</dbReference>
<dbReference type="HAMAP" id="MF_00218">
    <property type="entry name" value="URO_D"/>
    <property type="match status" value="1"/>
</dbReference>
<dbReference type="InterPro" id="IPR038071">
    <property type="entry name" value="UROD/MetE-like_sf"/>
</dbReference>
<dbReference type="InterPro" id="IPR006361">
    <property type="entry name" value="Uroporphyrinogen_deCO2ase_HemE"/>
</dbReference>
<dbReference type="InterPro" id="IPR000257">
    <property type="entry name" value="Uroporphyrinogen_deCOase"/>
</dbReference>
<dbReference type="NCBIfam" id="TIGR01464">
    <property type="entry name" value="hemE"/>
    <property type="match status" value="1"/>
</dbReference>
<dbReference type="PANTHER" id="PTHR21091">
    <property type="entry name" value="METHYLTETRAHYDROFOLATE:HOMOCYSTEINE METHYLTRANSFERASE RELATED"/>
    <property type="match status" value="1"/>
</dbReference>
<dbReference type="PANTHER" id="PTHR21091:SF169">
    <property type="entry name" value="UROPORPHYRINOGEN DECARBOXYLASE"/>
    <property type="match status" value="1"/>
</dbReference>
<dbReference type="Pfam" id="PF01208">
    <property type="entry name" value="URO-D"/>
    <property type="match status" value="1"/>
</dbReference>
<dbReference type="SUPFAM" id="SSF51726">
    <property type="entry name" value="UROD/MetE-like"/>
    <property type="match status" value="1"/>
</dbReference>
<dbReference type="PROSITE" id="PS00906">
    <property type="entry name" value="UROD_1"/>
    <property type="match status" value="1"/>
</dbReference>
<dbReference type="PROSITE" id="PS00907">
    <property type="entry name" value="UROD_2"/>
    <property type="match status" value="1"/>
</dbReference>
<organism>
    <name type="scientific">Helicobacter pylori (strain G27)</name>
    <dbReference type="NCBI Taxonomy" id="563041"/>
    <lineage>
        <taxon>Bacteria</taxon>
        <taxon>Pseudomonadati</taxon>
        <taxon>Campylobacterota</taxon>
        <taxon>Epsilonproteobacteria</taxon>
        <taxon>Campylobacterales</taxon>
        <taxon>Helicobacteraceae</taxon>
        <taxon>Helicobacter</taxon>
    </lineage>
</organism>
<accession>B5Z6X6</accession>
<evidence type="ECO:0000255" key="1">
    <source>
        <dbReference type="HAMAP-Rule" id="MF_00218"/>
    </source>
</evidence>
<gene>
    <name evidence="1" type="primary">hemE</name>
    <name type="ordered locus">HPG27_565</name>
</gene>
<feature type="chain" id="PRO_1000099998" description="Uroporphyrinogen decarboxylase">
    <location>
        <begin position="1"/>
        <end position="339"/>
    </location>
</feature>
<feature type="binding site" evidence="1">
    <location>
        <begin position="21"/>
        <end position="25"/>
    </location>
    <ligand>
        <name>substrate</name>
    </ligand>
</feature>
<feature type="binding site" evidence="1">
    <location>
        <position position="71"/>
    </location>
    <ligand>
        <name>substrate</name>
    </ligand>
</feature>
<feature type="binding site" evidence="1">
    <location>
        <position position="147"/>
    </location>
    <ligand>
        <name>substrate</name>
    </ligand>
</feature>
<feature type="binding site" evidence="1">
    <location>
        <position position="202"/>
    </location>
    <ligand>
        <name>substrate</name>
    </ligand>
</feature>
<feature type="binding site" evidence="1">
    <location>
        <position position="315"/>
    </location>
    <ligand>
        <name>substrate</name>
    </ligand>
</feature>
<feature type="site" description="Transition state stabilizer" evidence="1">
    <location>
        <position position="71"/>
    </location>
</feature>
<keyword id="KW-0963">Cytoplasm</keyword>
<keyword id="KW-0210">Decarboxylase</keyword>
<keyword id="KW-0456">Lyase</keyword>
<keyword id="KW-0627">Porphyrin biosynthesis</keyword>
<keyword id="KW-1185">Reference proteome</keyword>
<proteinExistence type="inferred from homology"/>
<comment type="function">
    <text evidence="1">Catalyzes the decarboxylation of four acetate groups of uroporphyrinogen-III to yield coproporphyrinogen-III.</text>
</comment>
<comment type="catalytic activity">
    <reaction evidence="1">
        <text>uroporphyrinogen III + 4 H(+) = coproporphyrinogen III + 4 CO2</text>
        <dbReference type="Rhea" id="RHEA:19865"/>
        <dbReference type="ChEBI" id="CHEBI:15378"/>
        <dbReference type="ChEBI" id="CHEBI:16526"/>
        <dbReference type="ChEBI" id="CHEBI:57308"/>
        <dbReference type="ChEBI" id="CHEBI:57309"/>
        <dbReference type="EC" id="4.1.1.37"/>
    </reaction>
</comment>
<comment type="pathway">
    <text evidence="1">Porphyrin-containing compound metabolism; protoporphyrin-IX biosynthesis; coproporphyrinogen-III from 5-aminolevulinate: step 4/4.</text>
</comment>
<comment type="subunit">
    <text evidence="1">Homodimer.</text>
</comment>
<comment type="subcellular location">
    <subcellularLocation>
        <location evidence="1">Cytoplasm</location>
    </subcellularLocation>
</comment>
<comment type="similarity">
    <text evidence="1">Belongs to the uroporphyrinogen decarboxylase family.</text>
</comment>
<name>DCUP_HELPG</name>